<protein>
    <recommendedName>
        <fullName>Uncharacterized protein T09B9.4</fullName>
    </recommendedName>
</protein>
<accession>Q09350</accession>
<sequence>MEHPKRPTPKNEALHIDASGRGESSFSVHRSHSGGHEPFAPSPGSSIGASVSMFSSRNSEAEVGDAEDLDGVRTIMMNIGVPDLLADREIQMRYPEFYQFLLAEQPTWFEPAPSNGTVYRVHHTTPLPDNHKKLRKELPFEMLDLMYRFFRQKHVNSQRKRENKELLEANKQLRIAAVQMFTKAEQEEEYISNSLLKKIQQLNQDKDYLVKKYQKDEESLTKSLMANVAKIPDVHGDEAAAEKLMADKQAEIERLRTYCSRAEKSYQEELMRLRAEKVDHESALEQEQELLINTLGKRMSQMNEEKRKLQQALEMAYLNGFVDFDDTVEVALHASASQKYNGNSPNVSANSPVVNTNSPAVSTSSPLVRNTDQQSTSSYRQQLNETAHLHIENKKLVGMCNQERRRSQATEAEVKKLNQRMSKMEAVLEAIRIEAVRTDGPLAWRLAALSHDNSIDEPPHRMLAERRAHGSSPPTVVVQPSTSRAGSNSTANINNDTHPHAQVAPILATVHPTQRATPARNERPDSHY</sequence>
<dbReference type="EMBL" id="Z47070">
    <property type="protein sequence ID" value="CAA87341.1"/>
    <property type="molecule type" value="Genomic_DNA"/>
</dbReference>
<dbReference type="PIR" id="T24730">
    <property type="entry name" value="T24730"/>
</dbReference>
<dbReference type="RefSeq" id="NP_509640.1">
    <property type="nucleotide sequence ID" value="NM_077239.6"/>
</dbReference>
<dbReference type="SMR" id="Q09350"/>
<dbReference type="BioGRID" id="46105">
    <property type="interactions" value="3"/>
</dbReference>
<dbReference type="DIP" id="DIP-24984N"/>
<dbReference type="FunCoup" id="Q09350">
    <property type="interactions" value="1651"/>
</dbReference>
<dbReference type="IntAct" id="Q09350">
    <property type="interactions" value="2"/>
</dbReference>
<dbReference type="STRING" id="6239.T09B9.4.1"/>
<dbReference type="iPTMnet" id="Q09350"/>
<dbReference type="PaxDb" id="6239-T09B9.4"/>
<dbReference type="PeptideAtlas" id="Q09350"/>
<dbReference type="EnsemblMetazoa" id="T09B9.4.1">
    <property type="protein sequence ID" value="T09B9.4.1"/>
    <property type="gene ID" value="WBGene00011645"/>
</dbReference>
<dbReference type="GeneID" id="181190"/>
<dbReference type="KEGG" id="cel:CELE_T09B9.4"/>
<dbReference type="UCSC" id="T09B9.4.1">
    <property type="organism name" value="c. elegans"/>
</dbReference>
<dbReference type="AGR" id="WB:WBGene00011645"/>
<dbReference type="CTD" id="181190"/>
<dbReference type="WormBase" id="T09B9.4">
    <property type="protein sequence ID" value="CE01652"/>
    <property type="gene ID" value="WBGene00011645"/>
</dbReference>
<dbReference type="eggNOG" id="KOG2129">
    <property type="taxonomic scope" value="Eukaryota"/>
</dbReference>
<dbReference type="GeneTree" id="ENSGT00390000013594"/>
<dbReference type="HOGENOM" id="CLU_538878_0_0_1"/>
<dbReference type="InParanoid" id="Q09350"/>
<dbReference type="OMA" id="MSQMNEE"/>
<dbReference type="OrthoDB" id="78858at2759"/>
<dbReference type="PhylomeDB" id="Q09350"/>
<dbReference type="PRO" id="PR:Q09350"/>
<dbReference type="Proteomes" id="UP000001940">
    <property type="component" value="Chromosome X"/>
</dbReference>
<dbReference type="Bgee" id="WBGene00011645">
    <property type="expression patterns" value="Expressed in germ line (C elegans) and 4 other cell types or tissues"/>
</dbReference>
<dbReference type="InterPro" id="IPR019152">
    <property type="entry name" value="DUF2046"/>
</dbReference>
<dbReference type="PANTHER" id="PTHR15276:SF0">
    <property type="entry name" value="COILED-COIL DOMAIN-CONTAINING PROTEIN 6"/>
    <property type="match status" value="1"/>
</dbReference>
<dbReference type="PANTHER" id="PTHR15276">
    <property type="entry name" value="H4 D10S170 PROTEIN-RELATED"/>
    <property type="match status" value="1"/>
</dbReference>
<dbReference type="Pfam" id="PF09755">
    <property type="entry name" value="DUF2046"/>
    <property type="match status" value="1"/>
</dbReference>
<organism>
    <name type="scientific">Caenorhabditis elegans</name>
    <dbReference type="NCBI Taxonomy" id="6239"/>
    <lineage>
        <taxon>Eukaryota</taxon>
        <taxon>Metazoa</taxon>
        <taxon>Ecdysozoa</taxon>
        <taxon>Nematoda</taxon>
        <taxon>Chromadorea</taxon>
        <taxon>Rhabditida</taxon>
        <taxon>Rhabditina</taxon>
        <taxon>Rhabditomorpha</taxon>
        <taxon>Rhabditoidea</taxon>
        <taxon>Rhabditidae</taxon>
        <taxon>Peloderinae</taxon>
        <taxon>Caenorhabditis</taxon>
    </lineage>
</organism>
<reference key="1">
    <citation type="journal article" date="1998" name="Science">
        <title>Genome sequence of the nematode C. elegans: a platform for investigating biology.</title>
        <authorList>
            <consortium name="The C. elegans sequencing consortium"/>
        </authorList>
    </citation>
    <scope>NUCLEOTIDE SEQUENCE [LARGE SCALE GENOMIC DNA]</scope>
    <source>
        <strain>Bristol N2</strain>
    </source>
</reference>
<feature type="chain" id="PRO_0000065458" description="Uncharacterized protein T09B9.4">
    <location>
        <begin position="1"/>
        <end position="528"/>
    </location>
</feature>
<feature type="repeat" description="1">
    <location>
        <begin position="185"/>
        <end position="213"/>
    </location>
</feature>
<feature type="repeat" description="2">
    <location>
        <begin position="285"/>
        <end position="313"/>
    </location>
</feature>
<feature type="region of interest" description="Disordered" evidence="1">
    <location>
        <begin position="1"/>
        <end position="51"/>
    </location>
</feature>
<feature type="region of interest" description="2 X 29 AA repeats">
    <location>
        <begin position="185"/>
        <end position="313"/>
    </location>
</feature>
<feature type="region of interest" description="Disordered" evidence="1">
    <location>
        <begin position="467"/>
        <end position="497"/>
    </location>
</feature>
<feature type="region of interest" description="Disordered" evidence="1">
    <location>
        <begin position="509"/>
        <end position="528"/>
    </location>
</feature>
<feature type="compositionally biased region" description="Polar residues" evidence="1">
    <location>
        <begin position="472"/>
        <end position="496"/>
    </location>
</feature>
<gene>
    <name type="ORF">T09B9.4</name>
</gene>
<keyword id="KW-1185">Reference proteome</keyword>
<keyword id="KW-0677">Repeat</keyword>
<evidence type="ECO:0000256" key="1">
    <source>
        <dbReference type="SAM" id="MobiDB-lite"/>
    </source>
</evidence>
<name>YRU4_CAEEL</name>
<proteinExistence type="predicted"/>